<evidence type="ECO:0000255" key="1">
    <source>
        <dbReference type="HAMAP-Rule" id="MF_01007"/>
    </source>
</evidence>
<evidence type="ECO:0000305" key="2"/>
<accession>P65433</accession>
<accession>Q99YJ9</accession>
<reference key="1">
    <citation type="journal article" date="2002" name="Proc. Natl. Acad. Sci. U.S.A.">
        <title>Genome sequence and comparative microarray analysis of serotype M18 group A Streptococcus strains associated with acute rheumatic fever outbreaks.</title>
        <authorList>
            <person name="Smoot J.C."/>
            <person name="Barbian K.D."/>
            <person name="Van Gompel J.J."/>
            <person name="Smoot L.M."/>
            <person name="Chaussee M.S."/>
            <person name="Sylva G.L."/>
            <person name="Sturdevant D.E."/>
            <person name="Ricklefs S.M."/>
            <person name="Porcella S.F."/>
            <person name="Parkins L.D."/>
            <person name="Beres S.B."/>
            <person name="Campbell D.S."/>
            <person name="Smith T.M."/>
            <person name="Zhang Q."/>
            <person name="Kapur V."/>
            <person name="Daly J.A."/>
            <person name="Veasy L.G."/>
            <person name="Musser J.M."/>
        </authorList>
    </citation>
    <scope>NUCLEOTIDE SEQUENCE [LARGE SCALE GENOMIC DNA]</scope>
    <source>
        <strain>MGAS8232</strain>
    </source>
</reference>
<dbReference type="EC" id="2.1.1.199" evidence="1"/>
<dbReference type="EMBL" id="AE009949">
    <property type="protein sequence ID" value="AAL98218.1"/>
    <property type="status" value="ALT_INIT"/>
    <property type="molecule type" value="Genomic_DNA"/>
</dbReference>
<dbReference type="RefSeq" id="WP_002988893.1">
    <property type="nucleotide sequence ID" value="NC_003485.1"/>
</dbReference>
<dbReference type="SMR" id="P65433"/>
<dbReference type="KEGG" id="spm:spyM18_1676"/>
<dbReference type="HOGENOM" id="CLU_038422_2_0_9"/>
<dbReference type="GO" id="GO:0005737">
    <property type="term" value="C:cytoplasm"/>
    <property type="evidence" value="ECO:0007669"/>
    <property type="project" value="UniProtKB-SubCell"/>
</dbReference>
<dbReference type="GO" id="GO:0071424">
    <property type="term" value="F:rRNA (cytosine-N4-)-methyltransferase activity"/>
    <property type="evidence" value="ECO:0007669"/>
    <property type="project" value="UniProtKB-UniRule"/>
</dbReference>
<dbReference type="GO" id="GO:0070475">
    <property type="term" value="P:rRNA base methylation"/>
    <property type="evidence" value="ECO:0007669"/>
    <property type="project" value="UniProtKB-UniRule"/>
</dbReference>
<dbReference type="FunFam" id="1.10.150.170:FF:000001">
    <property type="entry name" value="Ribosomal RNA small subunit methyltransferase H"/>
    <property type="match status" value="1"/>
</dbReference>
<dbReference type="Gene3D" id="1.10.150.170">
    <property type="entry name" value="Putative methyltransferase TM0872, insert domain"/>
    <property type="match status" value="1"/>
</dbReference>
<dbReference type="Gene3D" id="3.40.50.150">
    <property type="entry name" value="Vaccinia Virus protein VP39"/>
    <property type="match status" value="1"/>
</dbReference>
<dbReference type="HAMAP" id="MF_01007">
    <property type="entry name" value="16SrRNA_methyltr_H"/>
    <property type="match status" value="1"/>
</dbReference>
<dbReference type="InterPro" id="IPR002903">
    <property type="entry name" value="RsmH"/>
</dbReference>
<dbReference type="InterPro" id="IPR023397">
    <property type="entry name" value="SAM-dep_MeTrfase_MraW_recog"/>
</dbReference>
<dbReference type="InterPro" id="IPR029063">
    <property type="entry name" value="SAM-dependent_MTases_sf"/>
</dbReference>
<dbReference type="NCBIfam" id="TIGR00006">
    <property type="entry name" value="16S rRNA (cytosine(1402)-N(4))-methyltransferase RsmH"/>
    <property type="match status" value="1"/>
</dbReference>
<dbReference type="PANTHER" id="PTHR11265:SF0">
    <property type="entry name" value="12S RRNA N4-METHYLCYTIDINE METHYLTRANSFERASE"/>
    <property type="match status" value="1"/>
</dbReference>
<dbReference type="PANTHER" id="PTHR11265">
    <property type="entry name" value="S-ADENOSYL-METHYLTRANSFERASE MRAW"/>
    <property type="match status" value="1"/>
</dbReference>
<dbReference type="Pfam" id="PF01795">
    <property type="entry name" value="Methyltransf_5"/>
    <property type="match status" value="1"/>
</dbReference>
<dbReference type="PIRSF" id="PIRSF004486">
    <property type="entry name" value="MraW"/>
    <property type="match status" value="1"/>
</dbReference>
<dbReference type="SUPFAM" id="SSF81799">
    <property type="entry name" value="Putative methyltransferase TM0872, insert domain"/>
    <property type="match status" value="1"/>
</dbReference>
<dbReference type="SUPFAM" id="SSF53335">
    <property type="entry name" value="S-adenosyl-L-methionine-dependent methyltransferases"/>
    <property type="match status" value="1"/>
</dbReference>
<sequence>MTKEFHHVTVLLHETVDMLDIKPDGIYVDATLGGSGHSAYLLSKLGEEGHLYCFDQDQKAIDNAQVTLKSYIDKGQVTFIKDNFRHLKARLTALGVDEIDGILYDLGVSSPQLDERERGFSYKQDAPLDMRMDRQSLLTAYEVVNTYPFNDLVKIFFKYGEDKFSKQIARKIEQARAIKPIETTTELAELIKAAKPAKELKKKGHPAKQIFQAIRIEVNDELGAADESIQDAMELLALDGRISVITFHSLEDRLTKQLFKEASTVDVPKGLPLIPEDMKPKFELVSRKPILPSHSELTANKRAHSAKLRVAKKIRK</sequence>
<keyword id="KW-0963">Cytoplasm</keyword>
<keyword id="KW-0489">Methyltransferase</keyword>
<keyword id="KW-0698">rRNA processing</keyword>
<keyword id="KW-0949">S-adenosyl-L-methionine</keyword>
<keyword id="KW-0808">Transferase</keyword>
<organism>
    <name type="scientific">Streptococcus pyogenes serotype M18 (strain MGAS8232)</name>
    <dbReference type="NCBI Taxonomy" id="186103"/>
    <lineage>
        <taxon>Bacteria</taxon>
        <taxon>Bacillati</taxon>
        <taxon>Bacillota</taxon>
        <taxon>Bacilli</taxon>
        <taxon>Lactobacillales</taxon>
        <taxon>Streptococcaceae</taxon>
        <taxon>Streptococcus</taxon>
    </lineage>
</organism>
<feature type="chain" id="PRO_0000108724" description="Ribosomal RNA small subunit methyltransferase H">
    <location>
        <begin position="1"/>
        <end position="316"/>
    </location>
</feature>
<feature type="binding site" evidence="1">
    <location>
        <begin position="35"/>
        <end position="37"/>
    </location>
    <ligand>
        <name>S-adenosyl-L-methionine</name>
        <dbReference type="ChEBI" id="CHEBI:59789"/>
    </ligand>
</feature>
<feature type="binding site" evidence="1">
    <location>
        <position position="55"/>
    </location>
    <ligand>
        <name>S-adenosyl-L-methionine</name>
        <dbReference type="ChEBI" id="CHEBI:59789"/>
    </ligand>
</feature>
<feature type="binding site" evidence="1">
    <location>
        <position position="84"/>
    </location>
    <ligand>
        <name>S-adenosyl-L-methionine</name>
        <dbReference type="ChEBI" id="CHEBI:59789"/>
    </ligand>
</feature>
<feature type="binding site" evidence="1">
    <location>
        <position position="105"/>
    </location>
    <ligand>
        <name>S-adenosyl-L-methionine</name>
        <dbReference type="ChEBI" id="CHEBI:59789"/>
    </ligand>
</feature>
<feature type="binding site" evidence="1">
    <location>
        <position position="112"/>
    </location>
    <ligand>
        <name>S-adenosyl-L-methionine</name>
        <dbReference type="ChEBI" id="CHEBI:59789"/>
    </ligand>
</feature>
<protein>
    <recommendedName>
        <fullName evidence="1">Ribosomal RNA small subunit methyltransferase H</fullName>
        <ecNumber evidence="1">2.1.1.199</ecNumber>
    </recommendedName>
    <alternativeName>
        <fullName evidence="1">16S rRNA m(4)C1402 methyltransferase</fullName>
    </alternativeName>
    <alternativeName>
        <fullName evidence="1">rRNA (cytosine-N(4)-)-methyltransferase RsmH</fullName>
    </alternativeName>
</protein>
<gene>
    <name evidence="1" type="primary">rsmH</name>
    <name type="synonym">mraW</name>
    <name type="ordered locus">spyM18_1676</name>
</gene>
<proteinExistence type="inferred from homology"/>
<comment type="function">
    <text evidence="1">Specifically methylates the N4 position of cytidine in position 1402 (C1402) of 16S rRNA.</text>
</comment>
<comment type="catalytic activity">
    <reaction evidence="1">
        <text>cytidine(1402) in 16S rRNA + S-adenosyl-L-methionine = N(4)-methylcytidine(1402) in 16S rRNA + S-adenosyl-L-homocysteine + H(+)</text>
        <dbReference type="Rhea" id="RHEA:42928"/>
        <dbReference type="Rhea" id="RHEA-COMP:10286"/>
        <dbReference type="Rhea" id="RHEA-COMP:10287"/>
        <dbReference type="ChEBI" id="CHEBI:15378"/>
        <dbReference type="ChEBI" id="CHEBI:57856"/>
        <dbReference type="ChEBI" id="CHEBI:59789"/>
        <dbReference type="ChEBI" id="CHEBI:74506"/>
        <dbReference type="ChEBI" id="CHEBI:82748"/>
        <dbReference type="EC" id="2.1.1.199"/>
    </reaction>
</comment>
<comment type="subcellular location">
    <subcellularLocation>
        <location evidence="1">Cytoplasm</location>
    </subcellularLocation>
</comment>
<comment type="similarity">
    <text evidence="1">Belongs to the methyltransferase superfamily. RsmH family.</text>
</comment>
<comment type="sequence caution" evidence="2">
    <conflict type="erroneous initiation">
        <sequence resource="EMBL-CDS" id="AAL98218"/>
    </conflict>
</comment>
<name>RSMH_STRP8</name>